<accession>Q12WS3</accession>
<name>RPO5_METBU</name>
<keyword id="KW-0963">Cytoplasm</keyword>
<keyword id="KW-0240">DNA-directed RNA polymerase</keyword>
<keyword id="KW-0548">Nucleotidyltransferase</keyword>
<keyword id="KW-0804">Transcription</keyword>
<keyword id="KW-0808">Transferase</keyword>
<comment type="function">
    <text evidence="1">DNA-dependent RNA polymerase (RNAP) catalyzes the transcription of DNA into RNA using the four ribonucleoside triphosphates as substrates.</text>
</comment>
<comment type="catalytic activity">
    <reaction evidence="1">
        <text>RNA(n) + a ribonucleoside 5'-triphosphate = RNA(n+1) + diphosphate</text>
        <dbReference type="Rhea" id="RHEA:21248"/>
        <dbReference type="Rhea" id="RHEA-COMP:14527"/>
        <dbReference type="Rhea" id="RHEA-COMP:17342"/>
        <dbReference type="ChEBI" id="CHEBI:33019"/>
        <dbReference type="ChEBI" id="CHEBI:61557"/>
        <dbReference type="ChEBI" id="CHEBI:140395"/>
        <dbReference type="EC" id="2.7.7.6"/>
    </reaction>
</comment>
<comment type="subunit">
    <text evidence="1">Part of the RNA polymerase complex.</text>
</comment>
<comment type="subcellular location">
    <subcellularLocation>
        <location evidence="1">Cytoplasm</location>
    </subcellularLocation>
</comment>
<comment type="similarity">
    <text evidence="1">Belongs to the archaeal Rpo5/eukaryotic RPB5 RNA polymerase subunit family.</text>
</comment>
<dbReference type="EC" id="2.7.7.6" evidence="1"/>
<dbReference type="EMBL" id="CP000300">
    <property type="protein sequence ID" value="ABE52103.1"/>
    <property type="molecule type" value="Genomic_DNA"/>
</dbReference>
<dbReference type="RefSeq" id="WP_011499249.1">
    <property type="nucleotide sequence ID" value="NC_007955.1"/>
</dbReference>
<dbReference type="SMR" id="Q12WS3"/>
<dbReference type="STRING" id="259564.Mbur_1180"/>
<dbReference type="GeneID" id="3998335"/>
<dbReference type="KEGG" id="mbu:Mbur_1180"/>
<dbReference type="HOGENOM" id="CLU_058320_4_0_2"/>
<dbReference type="OrthoDB" id="30537at2157"/>
<dbReference type="Proteomes" id="UP000001979">
    <property type="component" value="Chromosome"/>
</dbReference>
<dbReference type="GO" id="GO:0005737">
    <property type="term" value="C:cytoplasm"/>
    <property type="evidence" value="ECO:0007669"/>
    <property type="project" value="UniProtKB-SubCell"/>
</dbReference>
<dbReference type="GO" id="GO:0000428">
    <property type="term" value="C:DNA-directed RNA polymerase complex"/>
    <property type="evidence" value="ECO:0007669"/>
    <property type="project" value="UniProtKB-KW"/>
</dbReference>
<dbReference type="GO" id="GO:0003677">
    <property type="term" value="F:DNA binding"/>
    <property type="evidence" value="ECO:0007669"/>
    <property type="project" value="InterPro"/>
</dbReference>
<dbReference type="GO" id="GO:0003899">
    <property type="term" value="F:DNA-directed RNA polymerase activity"/>
    <property type="evidence" value="ECO:0007669"/>
    <property type="project" value="UniProtKB-UniRule"/>
</dbReference>
<dbReference type="GO" id="GO:0006366">
    <property type="term" value="P:transcription by RNA polymerase II"/>
    <property type="evidence" value="ECO:0007669"/>
    <property type="project" value="TreeGrafter"/>
</dbReference>
<dbReference type="GO" id="GO:0006362">
    <property type="term" value="P:transcription elongation by RNA polymerase I"/>
    <property type="evidence" value="ECO:0007669"/>
    <property type="project" value="TreeGrafter"/>
</dbReference>
<dbReference type="GO" id="GO:0042797">
    <property type="term" value="P:tRNA transcription by RNA polymerase III"/>
    <property type="evidence" value="ECO:0007669"/>
    <property type="project" value="TreeGrafter"/>
</dbReference>
<dbReference type="Gene3D" id="3.90.940.20">
    <property type="entry name" value="RPB5-like RNA polymerase subunit"/>
    <property type="match status" value="1"/>
</dbReference>
<dbReference type="HAMAP" id="MF_00025">
    <property type="entry name" value="RNApol_Rpo5_RPB5"/>
    <property type="match status" value="1"/>
</dbReference>
<dbReference type="InterPro" id="IPR014381">
    <property type="entry name" value="Arch_Rpo5/euc_Rpb5"/>
</dbReference>
<dbReference type="InterPro" id="IPR000783">
    <property type="entry name" value="RNA_pol_subH/Rpb5_C"/>
</dbReference>
<dbReference type="InterPro" id="IPR035913">
    <property type="entry name" value="RPB5-like_sf"/>
</dbReference>
<dbReference type="NCBIfam" id="NF007129">
    <property type="entry name" value="PRK09570.1"/>
    <property type="match status" value="1"/>
</dbReference>
<dbReference type="PANTHER" id="PTHR10535">
    <property type="entry name" value="DNA-DIRECTED RNA POLYMERASES I, II, AND III SUBUNIT RPABC1"/>
    <property type="match status" value="1"/>
</dbReference>
<dbReference type="PANTHER" id="PTHR10535:SF0">
    <property type="entry name" value="DNA-DIRECTED RNA POLYMERASES I, II, AND III SUBUNIT RPABC1"/>
    <property type="match status" value="1"/>
</dbReference>
<dbReference type="Pfam" id="PF01191">
    <property type="entry name" value="RNA_pol_Rpb5_C"/>
    <property type="match status" value="1"/>
</dbReference>
<dbReference type="SUPFAM" id="SSF55287">
    <property type="entry name" value="RPB5-like RNA polymerase subunit"/>
    <property type="match status" value="1"/>
</dbReference>
<gene>
    <name evidence="1" type="primary">rpo5</name>
    <name evidence="1" type="synonym">rpoH</name>
    <name type="ordered locus">Mbur_1180</name>
</gene>
<evidence type="ECO:0000255" key="1">
    <source>
        <dbReference type="HAMAP-Rule" id="MF_00025"/>
    </source>
</evidence>
<sequence>MSKFSLLDHELIPHHEIMDEDDLKTVLTHYNVEREQLPKLKVTDPIALEIGAEPGDVVKVIRKSQTAGEALYYRYVIG</sequence>
<reference key="1">
    <citation type="journal article" date="2009" name="ISME J.">
        <title>The genome sequence of the psychrophilic archaeon, Methanococcoides burtonii: the role of genome evolution in cold adaptation.</title>
        <authorList>
            <person name="Allen M.A."/>
            <person name="Lauro F.M."/>
            <person name="Williams T.J."/>
            <person name="Burg D."/>
            <person name="Siddiqui K.S."/>
            <person name="De Francisci D."/>
            <person name="Chong K.W."/>
            <person name="Pilak O."/>
            <person name="Chew H.H."/>
            <person name="De Maere M.Z."/>
            <person name="Ting L."/>
            <person name="Katrib M."/>
            <person name="Ng C."/>
            <person name="Sowers K.R."/>
            <person name="Galperin M.Y."/>
            <person name="Anderson I.J."/>
            <person name="Ivanova N."/>
            <person name="Dalin E."/>
            <person name="Martinez M."/>
            <person name="Lapidus A."/>
            <person name="Hauser L."/>
            <person name="Land M."/>
            <person name="Thomas T."/>
            <person name="Cavicchioli R."/>
        </authorList>
    </citation>
    <scope>NUCLEOTIDE SEQUENCE [LARGE SCALE GENOMIC DNA]</scope>
    <source>
        <strain>DSM 6242 / NBRC 107633 / OCM 468 / ACE-M</strain>
    </source>
</reference>
<protein>
    <recommendedName>
        <fullName evidence="1">DNA-directed RNA polymerase subunit Rpo5</fullName>
        <ecNumber evidence="1">2.7.7.6</ecNumber>
    </recommendedName>
    <alternativeName>
        <fullName evidence="1">DNA-directed RNA polymerase subunit H</fullName>
    </alternativeName>
</protein>
<proteinExistence type="inferred from homology"/>
<feature type="chain" id="PRO_1000002190" description="DNA-directed RNA polymerase subunit Rpo5">
    <location>
        <begin position="1"/>
        <end position="78"/>
    </location>
</feature>
<organism>
    <name type="scientific">Methanococcoides burtonii (strain DSM 6242 / NBRC 107633 / OCM 468 / ACE-M)</name>
    <dbReference type="NCBI Taxonomy" id="259564"/>
    <lineage>
        <taxon>Archaea</taxon>
        <taxon>Methanobacteriati</taxon>
        <taxon>Methanobacteriota</taxon>
        <taxon>Stenosarchaea group</taxon>
        <taxon>Methanomicrobia</taxon>
        <taxon>Methanosarcinales</taxon>
        <taxon>Methanosarcinaceae</taxon>
        <taxon>Methanococcoides</taxon>
    </lineage>
</organism>